<comment type="similarity">
    <text evidence="1">Belongs to the UPF0301 (AlgH) family.</text>
</comment>
<evidence type="ECO:0000255" key="1">
    <source>
        <dbReference type="HAMAP-Rule" id="MF_00758"/>
    </source>
</evidence>
<sequence length="195" mass="21171">MATDSALINLTHHFLIAMPGLEDEAFAKSVVYMCEHSDRGALGLVINKPSDINLKNLFDKVELPLRRDDLTEAPVFQGGPVQTERGFVLHESMMPGSESVYASTMTIPGGLEMTTSKDVLEALSTGAGPRKVFVSLGYSAWGEGQLESEISDNSWLTVPADVAVIFDTPVEQRYDKALMLLGLQSWMLSPDAGHA</sequence>
<proteinExistence type="inferred from homology"/>
<protein>
    <recommendedName>
        <fullName evidence="1">UPF0301 protein Bpro_1142</fullName>
    </recommendedName>
</protein>
<accession>Q12EE9</accession>
<keyword id="KW-1185">Reference proteome</keyword>
<gene>
    <name type="ordered locus">Bpro_1142</name>
</gene>
<reference key="1">
    <citation type="journal article" date="2008" name="Appl. Environ. Microbiol.">
        <title>The genome of Polaromonas sp. strain JS666: insights into the evolution of a hydrocarbon- and xenobiotic-degrading bacterium, and features of relevance to biotechnology.</title>
        <authorList>
            <person name="Mattes T.E."/>
            <person name="Alexander A.K."/>
            <person name="Richardson P.M."/>
            <person name="Munk A.C."/>
            <person name="Han C.S."/>
            <person name="Stothard P."/>
            <person name="Coleman N.V."/>
        </authorList>
    </citation>
    <scope>NUCLEOTIDE SEQUENCE [LARGE SCALE GENOMIC DNA]</scope>
    <source>
        <strain>JS666 / ATCC BAA-500</strain>
    </source>
</reference>
<dbReference type="EMBL" id="CP000316">
    <property type="protein sequence ID" value="ABE43093.1"/>
    <property type="molecule type" value="Genomic_DNA"/>
</dbReference>
<dbReference type="RefSeq" id="WP_011482094.1">
    <property type="nucleotide sequence ID" value="NC_007948.1"/>
</dbReference>
<dbReference type="SMR" id="Q12EE9"/>
<dbReference type="STRING" id="296591.Bpro_1142"/>
<dbReference type="KEGG" id="pol:Bpro_1142"/>
<dbReference type="eggNOG" id="COG1678">
    <property type="taxonomic scope" value="Bacteria"/>
</dbReference>
<dbReference type="HOGENOM" id="CLU_057596_1_0_4"/>
<dbReference type="OrthoDB" id="9807486at2"/>
<dbReference type="Proteomes" id="UP000001983">
    <property type="component" value="Chromosome"/>
</dbReference>
<dbReference type="GO" id="GO:0005829">
    <property type="term" value="C:cytosol"/>
    <property type="evidence" value="ECO:0007669"/>
    <property type="project" value="TreeGrafter"/>
</dbReference>
<dbReference type="Gene3D" id="3.40.1740.10">
    <property type="entry name" value="VC0467-like"/>
    <property type="match status" value="1"/>
</dbReference>
<dbReference type="HAMAP" id="MF_00758">
    <property type="entry name" value="UPF0301"/>
    <property type="match status" value="1"/>
</dbReference>
<dbReference type="InterPro" id="IPR003774">
    <property type="entry name" value="AlgH-like"/>
</dbReference>
<dbReference type="NCBIfam" id="NF001266">
    <property type="entry name" value="PRK00228.1-1"/>
    <property type="match status" value="1"/>
</dbReference>
<dbReference type="PANTHER" id="PTHR30327">
    <property type="entry name" value="UNCHARACTERIZED PROTEIN YQGE"/>
    <property type="match status" value="1"/>
</dbReference>
<dbReference type="PANTHER" id="PTHR30327:SF1">
    <property type="entry name" value="UPF0301 PROTEIN YQGE"/>
    <property type="match status" value="1"/>
</dbReference>
<dbReference type="Pfam" id="PF02622">
    <property type="entry name" value="DUF179"/>
    <property type="match status" value="1"/>
</dbReference>
<dbReference type="SUPFAM" id="SSF143456">
    <property type="entry name" value="VC0467-like"/>
    <property type="match status" value="1"/>
</dbReference>
<organism>
    <name type="scientific">Polaromonas sp. (strain JS666 / ATCC BAA-500)</name>
    <dbReference type="NCBI Taxonomy" id="296591"/>
    <lineage>
        <taxon>Bacteria</taxon>
        <taxon>Pseudomonadati</taxon>
        <taxon>Pseudomonadota</taxon>
        <taxon>Betaproteobacteria</taxon>
        <taxon>Burkholderiales</taxon>
        <taxon>Comamonadaceae</taxon>
        <taxon>Polaromonas</taxon>
    </lineage>
</organism>
<name>Y1142_POLSJ</name>
<feature type="chain" id="PRO_0000258853" description="UPF0301 protein Bpro_1142">
    <location>
        <begin position="1"/>
        <end position="195"/>
    </location>
</feature>